<proteinExistence type="evidence at protein level"/>
<name>DEF5_TRIKH</name>
<organism>
    <name type="scientific">Triticum kiharae</name>
    <name type="common">Wheat</name>
    <dbReference type="NCBI Taxonomy" id="376535"/>
    <lineage>
        <taxon>Eukaryota</taxon>
        <taxon>Viridiplantae</taxon>
        <taxon>Streptophyta</taxon>
        <taxon>Embryophyta</taxon>
        <taxon>Tracheophyta</taxon>
        <taxon>Spermatophyta</taxon>
        <taxon>Magnoliopsida</taxon>
        <taxon>Liliopsida</taxon>
        <taxon>Poales</taxon>
        <taxon>Poaceae</taxon>
        <taxon>BOP clade</taxon>
        <taxon>Pooideae</taxon>
        <taxon>Triticodae</taxon>
        <taxon>Triticeae</taxon>
        <taxon>Triticinae</taxon>
        <taxon>Triticum</taxon>
    </lineage>
</organism>
<feature type="chain" id="PRO_0000287893" description="Defensin Tk-AMP-D5">
    <location>
        <begin position="1"/>
        <end position="46"/>
    </location>
</feature>
<feature type="disulfide bond" evidence="1">
    <location>
        <begin position="3"/>
        <end position="46"/>
    </location>
</feature>
<feature type="disulfide bond" evidence="1">
    <location>
        <begin position="14"/>
        <end position="34"/>
    </location>
</feature>
<feature type="disulfide bond" evidence="1">
    <location>
        <begin position="20"/>
        <end position="40"/>
    </location>
</feature>
<feature type="disulfide bond" evidence="1">
    <location>
        <begin position="24"/>
        <end position="42"/>
    </location>
</feature>
<keyword id="KW-0929">Antimicrobial</keyword>
<keyword id="KW-0903">Direct protein sequencing</keyword>
<keyword id="KW-1015">Disulfide bond</keyword>
<keyword id="KW-0295">Fungicide</keyword>
<keyword id="KW-0611">Plant defense</keyword>
<reference evidence="3" key="1">
    <citation type="journal article" date="2007" name="Biochimie">
        <title>Seed defensins from T. kiharae and related species: Genome localization of defensin-encoding genes.</title>
        <authorList>
            <person name="Odintsova T.I."/>
            <person name="Egorov T.A."/>
            <person name="Musolyamov A.K."/>
            <person name="Odintsova M.S."/>
            <person name="Pukhalsky V.A."/>
            <person name="Grishin E.V."/>
        </authorList>
    </citation>
    <scope>PROTEIN SEQUENCE</scope>
    <scope>MASS SPECTROMETRY</scope>
    <source>
        <tissue evidence="2">Seed</tissue>
    </source>
</reference>
<dbReference type="SMR" id="P84966"/>
<dbReference type="GO" id="GO:0050832">
    <property type="term" value="P:defense response to fungus"/>
    <property type="evidence" value="ECO:0007669"/>
    <property type="project" value="UniProtKB-KW"/>
</dbReference>
<dbReference type="GO" id="GO:0031640">
    <property type="term" value="P:killing of cells of another organism"/>
    <property type="evidence" value="ECO:0007669"/>
    <property type="project" value="UniProtKB-KW"/>
</dbReference>
<dbReference type="Gene3D" id="3.30.30.10">
    <property type="entry name" value="Knottin, scorpion toxin-like"/>
    <property type="match status" value="1"/>
</dbReference>
<dbReference type="InterPro" id="IPR008176">
    <property type="entry name" value="Defensin_plant"/>
</dbReference>
<dbReference type="InterPro" id="IPR003614">
    <property type="entry name" value="Scorpion_toxin-like"/>
</dbReference>
<dbReference type="InterPro" id="IPR036574">
    <property type="entry name" value="Scorpion_toxin-like_sf"/>
</dbReference>
<dbReference type="Pfam" id="PF00304">
    <property type="entry name" value="Gamma-thionin"/>
    <property type="match status" value="1"/>
</dbReference>
<dbReference type="PRINTS" id="PR00288">
    <property type="entry name" value="PUROTHIONIN"/>
</dbReference>
<dbReference type="SMART" id="SM00505">
    <property type="entry name" value="Knot1"/>
    <property type="match status" value="1"/>
</dbReference>
<dbReference type="SUPFAM" id="SSF57095">
    <property type="entry name" value="Scorpion toxin-like"/>
    <property type="match status" value="1"/>
</dbReference>
<dbReference type="PROSITE" id="PS00940">
    <property type="entry name" value="GAMMA_THIONIN"/>
    <property type="match status" value="1"/>
</dbReference>
<protein>
    <recommendedName>
        <fullName>Defensin Tk-AMP-D5</fullName>
    </recommendedName>
</protein>
<sequence>RECRSESKKFVGLCVSDTNCASVCLTERFPGGKCDGYRRCFCTKDC</sequence>
<comment type="function">
    <text evidence="1">Plant defense peptide.</text>
</comment>
<comment type="mass spectrometry"/>
<comment type="similarity">
    <text evidence="3">Belongs to the DEFL family.</text>
</comment>
<accession>P84966</accession>
<evidence type="ECO:0000250" key="1">
    <source>
        <dbReference type="UniProtKB" id="Q8GTM0"/>
    </source>
</evidence>
<evidence type="ECO:0000269" key="2">
    <source>
    </source>
</evidence>
<evidence type="ECO:0000305" key="3"/>